<organism>
    <name type="scientific">Methanocaldococcus jannaschii (strain ATCC 43067 / DSM 2661 / JAL-1 / JCM 10045 / NBRC 100440)</name>
    <name type="common">Methanococcus jannaschii</name>
    <dbReference type="NCBI Taxonomy" id="243232"/>
    <lineage>
        <taxon>Archaea</taxon>
        <taxon>Methanobacteriati</taxon>
        <taxon>Methanobacteriota</taxon>
        <taxon>Methanomada group</taxon>
        <taxon>Methanococci</taxon>
        <taxon>Methanococcales</taxon>
        <taxon>Methanocaldococcaceae</taxon>
        <taxon>Methanocaldococcus</taxon>
    </lineage>
</organism>
<name>PATS_METJA</name>
<reference key="1">
    <citation type="journal article" date="1996" name="Science">
        <title>Complete genome sequence of the methanogenic archaeon, Methanococcus jannaschii.</title>
        <authorList>
            <person name="Bult C.J."/>
            <person name="White O."/>
            <person name="Olsen G.J."/>
            <person name="Zhou L."/>
            <person name="Fleischmann R.D."/>
            <person name="Sutton G.G."/>
            <person name="Blake J.A."/>
            <person name="FitzGerald L.M."/>
            <person name="Clayton R.A."/>
            <person name="Gocayne J.D."/>
            <person name="Kerlavage A.R."/>
            <person name="Dougherty B.A."/>
            <person name="Tomb J.-F."/>
            <person name="Adams M.D."/>
            <person name="Reich C.I."/>
            <person name="Overbeek R."/>
            <person name="Kirkness E.F."/>
            <person name="Weinstock K.G."/>
            <person name="Merrick J.M."/>
            <person name="Glodek A."/>
            <person name="Scott J.L."/>
            <person name="Geoghagen N.S.M."/>
            <person name="Weidman J.F."/>
            <person name="Fuhrmann J.L."/>
            <person name="Nguyen D."/>
            <person name="Utterback T.R."/>
            <person name="Kelley J.M."/>
            <person name="Peterson J.D."/>
            <person name="Sadow P.W."/>
            <person name="Hanna M.C."/>
            <person name="Cotton M.D."/>
            <person name="Roberts K.M."/>
            <person name="Hurst M.A."/>
            <person name="Kaine B.P."/>
            <person name="Borodovsky M."/>
            <person name="Klenk H.-P."/>
            <person name="Fraser C.M."/>
            <person name="Smith H.O."/>
            <person name="Woese C.R."/>
            <person name="Venter J.C."/>
        </authorList>
    </citation>
    <scope>NUCLEOTIDE SEQUENCE [LARGE SCALE GENOMIC DNA]</scope>
    <source>
        <strain>ATCC 43067 / DSM 2661 / JAL-1 / JCM 10045 / NBRC 100440</strain>
    </source>
</reference>
<reference key="2">
    <citation type="journal article" date="2000" name="FEBS Lett.">
        <title>Soluble P-type ATPase from an archaeon, Methanococcus jannaschii.</title>
        <authorList>
            <person name="Ogawa H."/>
            <person name="Haga T."/>
            <person name="Toyoshima C."/>
        </authorList>
    </citation>
    <scope>CHARACTERIZATION</scope>
</reference>
<reference key="3">
    <citation type="journal article" date="2003" name="FEBS Lett.">
        <title>The Methanocaldococcus jannaschii protein Mj0968 is not a P-type ATPase.</title>
        <authorList>
            <person name="Bramkamp M."/>
            <person name="Gassel M."/>
            <person name="Herkenhoff-Hesselmann B."/>
            <person name="Bertrand J."/>
            <person name="Altendorf K."/>
        </authorList>
    </citation>
    <scope>CHARACTERIZATION</scope>
</reference>
<proteinExistence type="evidence at protein level"/>
<dbReference type="EC" id="3.6.3.-"/>
<dbReference type="EMBL" id="L77117">
    <property type="protein sequence ID" value="AAB98973.1"/>
    <property type="molecule type" value="Genomic_DNA"/>
</dbReference>
<dbReference type="PIR" id="H64420">
    <property type="entry name" value="H64420"/>
</dbReference>
<dbReference type="RefSeq" id="WP_010870482.1">
    <property type="nucleotide sequence ID" value="NC_000909.1"/>
</dbReference>
<dbReference type="SMR" id="Q58378"/>
<dbReference type="FunCoup" id="Q58378">
    <property type="interactions" value="1"/>
</dbReference>
<dbReference type="STRING" id="243232.MJ_0968"/>
<dbReference type="PaxDb" id="243232-MJ_0968"/>
<dbReference type="EnsemblBacteria" id="AAB98973">
    <property type="protein sequence ID" value="AAB98973"/>
    <property type="gene ID" value="MJ_0968"/>
</dbReference>
<dbReference type="GeneID" id="1451866"/>
<dbReference type="KEGG" id="mja:MJ_0968"/>
<dbReference type="eggNOG" id="arCOG01579">
    <property type="taxonomic scope" value="Archaea"/>
</dbReference>
<dbReference type="HOGENOM" id="CLU_1052165_0_0_2"/>
<dbReference type="InParanoid" id="Q58378"/>
<dbReference type="OrthoDB" id="8588at2157"/>
<dbReference type="PhylomeDB" id="Q58378"/>
<dbReference type="SABIO-RK" id="Q58378"/>
<dbReference type="Proteomes" id="UP000000805">
    <property type="component" value="Chromosome"/>
</dbReference>
<dbReference type="GO" id="GO:0005524">
    <property type="term" value="F:ATP binding"/>
    <property type="evidence" value="ECO:0007669"/>
    <property type="project" value="UniProtKB-KW"/>
</dbReference>
<dbReference type="GO" id="GO:0016787">
    <property type="term" value="F:hydrolase activity"/>
    <property type="evidence" value="ECO:0007669"/>
    <property type="project" value="UniProtKB-KW"/>
</dbReference>
<dbReference type="GO" id="GO:0046872">
    <property type="term" value="F:metal ion binding"/>
    <property type="evidence" value="ECO:0007669"/>
    <property type="project" value="UniProtKB-KW"/>
</dbReference>
<dbReference type="Gene3D" id="3.40.50.1000">
    <property type="entry name" value="HAD superfamily/HAD-like"/>
    <property type="match status" value="1"/>
</dbReference>
<dbReference type="InterPro" id="IPR036412">
    <property type="entry name" value="HAD-like_sf"/>
</dbReference>
<dbReference type="InterPro" id="IPR023214">
    <property type="entry name" value="HAD_sf"/>
</dbReference>
<dbReference type="PANTHER" id="PTHR46594">
    <property type="entry name" value="P-TYPE CATION-TRANSPORTING ATPASE"/>
    <property type="match status" value="1"/>
</dbReference>
<dbReference type="PANTHER" id="PTHR46594:SF4">
    <property type="entry name" value="P-TYPE CATION-TRANSPORTING ATPASE"/>
    <property type="match status" value="1"/>
</dbReference>
<dbReference type="Pfam" id="PF00702">
    <property type="entry name" value="Hydrolase"/>
    <property type="match status" value="1"/>
</dbReference>
<dbReference type="PRINTS" id="PR00119">
    <property type="entry name" value="CATATPASE"/>
</dbReference>
<dbReference type="SUPFAM" id="SSF56784">
    <property type="entry name" value="HAD-like"/>
    <property type="match status" value="1"/>
</dbReference>
<accession>Q58378</accession>
<sequence length="273" mass="30739">MKVAIVFDSAGTLVKIMRVIKDLKKNKFICNSQTVDIVDKKKGRALVIIKEDPLKVVDKENPEKLISDLLKEVEIGISYCNPPINREGIFKDRKTKVKELQEPLNILKRYEVETGYGSALIIDTYAGEVEYTIATAGCLFKEVKETIKQLKDLGVKVFIASGDRKGFIKRLAEITGVDERYIMAEAHQELKRDLIRNLKKEGYFTIMVGDGANDVPAMIESDLAVVTLQNGNVSRRALETADIKIYNIKEIVDICKKVINGEIKGRMQIKECS</sequence>
<feature type="chain" id="PRO_0000046397" description="Soluble P-type ATPase-like phosphatase">
    <location>
        <begin position="1"/>
        <end position="273"/>
    </location>
</feature>
<feature type="active site" description="4-aspartylphosphate intermediate" evidence="1">
    <location>
        <position position="8"/>
    </location>
</feature>
<keyword id="KW-0067">ATP-binding</keyword>
<keyword id="KW-0378">Hydrolase</keyword>
<keyword id="KW-0460">Magnesium</keyword>
<keyword id="KW-0479">Metal-binding</keyword>
<keyword id="KW-0547">Nucleotide-binding</keyword>
<keyword id="KW-0597">Phosphoprotein</keyword>
<keyword id="KW-1185">Reference proteome</keyword>
<evidence type="ECO:0000305" key="1"/>
<gene>
    <name type="primary">patS</name>
    <name type="ordered locus">MJ0968</name>
</gene>
<comment type="function">
    <text>Most probably acts as a phosphatase in the cytosol.</text>
</comment>
<comment type="cofactor">
    <cofactor>
        <name>Mg(2+)</name>
        <dbReference type="ChEBI" id="CHEBI:18420"/>
    </cofactor>
</comment>
<comment type="activity regulation">
    <text>Inhibited by orthovanadate.</text>
</comment>
<comment type="biophysicochemical properties">
    <temperatureDependence>
        <text>Optimum temperature is 50 degrees Celsius.</text>
    </temperatureDependence>
</comment>
<comment type="similarity">
    <text evidence="1">Belongs to the cation transport ATPase (P-type) (TC 3.A.3) family. Type IB subfamily.</text>
</comment>
<protein>
    <recommendedName>
        <fullName>Soluble P-type ATPase-like phosphatase</fullName>
        <ecNumber>3.6.3.-</ecNumber>
    </recommendedName>
</protein>